<dbReference type="EC" id="7.2.2.6" evidence="1"/>
<dbReference type="EMBL" id="AL513382">
    <property type="protein sequence ID" value="CAD05168.1"/>
    <property type="molecule type" value="Genomic_DNA"/>
</dbReference>
<dbReference type="EMBL" id="AE014613">
    <property type="protein sequence ID" value="AAO69781.1"/>
    <property type="molecule type" value="Genomic_DNA"/>
</dbReference>
<dbReference type="RefSeq" id="NP_455265.1">
    <property type="nucleotide sequence ID" value="NC_003198.1"/>
</dbReference>
<dbReference type="RefSeq" id="WP_000088016.1">
    <property type="nucleotide sequence ID" value="NZ_WSUR01000015.1"/>
</dbReference>
<dbReference type="SMR" id="Q8Z8E5"/>
<dbReference type="STRING" id="220341.gene:17584755"/>
<dbReference type="KEGG" id="stt:t2170"/>
<dbReference type="KEGG" id="sty:STY0746"/>
<dbReference type="PATRIC" id="fig|220341.7.peg.752"/>
<dbReference type="eggNOG" id="COG2216">
    <property type="taxonomic scope" value="Bacteria"/>
</dbReference>
<dbReference type="HOGENOM" id="CLU_025728_2_0_6"/>
<dbReference type="OMA" id="ILWLWFT"/>
<dbReference type="OrthoDB" id="9814270at2"/>
<dbReference type="Proteomes" id="UP000000541">
    <property type="component" value="Chromosome"/>
</dbReference>
<dbReference type="Proteomes" id="UP000002670">
    <property type="component" value="Chromosome"/>
</dbReference>
<dbReference type="GO" id="GO:0005886">
    <property type="term" value="C:plasma membrane"/>
    <property type="evidence" value="ECO:0007669"/>
    <property type="project" value="UniProtKB-SubCell"/>
</dbReference>
<dbReference type="GO" id="GO:0005524">
    <property type="term" value="F:ATP binding"/>
    <property type="evidence" value="ECO:0007669"/>
    <property type="project" value="UniProtKB-UniRule"/>
</dbReference>
<dbReference type="GO" id="GO:0016887">
    <property type="term" value="F:ATP hydrolysis activity"/>
    <property type="evidence" value="ECO:0007669"/>
    <property type="project" value="InterPro"/>
</dbReference>
<dbReference type="GO" id="GO:0000287">
    <property type="term" value="F:magnesium ion binding"/>
    <property type="evidence" value="ECO:0007669"/>
    <property type="project" value="UniProtKB-UniRule"/>
</dbReference>
<dbReference type="GO" id="GO:0008556">
    <property type="term" value="F:P-type potassium transmembrane transporter activity"/>
    <property type="evidence" value="ECO:0007669"/>
    <property type="project" value="UniProtKB-UniRule"/>
</dbReference>
<dbReference type="FunFam" id="3.40.1110.10:FF:000007">
    <property type="entry name" value="Potassium-transporting ATPase ATP-binding subunit"/>
    <property type="match status" value="1"/>
</dbReference>
<dbReference type="Gene3D" id="3.40.1110.10">
    <property type="entry name" value="Calcium-transporting ATPase, cytoplasmic domain N"/>
    <property type="match status" value="1"/>
</dbReference>
<dbReference type="Gene3D" id="2.70.150.10">
    <property type="entry name" value="Calcium-transporting ATPase, cytoplasmic transduction domain A"/>
    <property type="match status" value="1"/>
</dbReference>
<dbReference type="Gene3D" id="1.20.1110.10">
    <property type="entry name" value="Calcium-transporting ATPase, transmembrane domain"/>
    <property type="match status" value="1"/>
</dbReference>
<dbReference type="Gene3D" id="3.40.50.1000">
    <property type="entry name" value="HAD superfamily/HAD-like"/>
    <property type="match status" value="1"/>
</dbReference>
<dbReference type="HAMAP" id="MF_00285">
    <property type="entry name" value="KdpB"/>
    <property type="match status" value="1"/>
</dbReference>
<dbReference type="InterPro" id="IPR023299">
    <property type="entry name" value="ATPase_P-typ_cyto_dom_N"/>
</dbReference>
<dbReference type="InterPro" id="IPR018303">
    <property type="entry name" value="ATPase_P-typ_P_site"/>
</dbReference>
<dbReference type="InterPro" id="IPR008250">
    <property type="entry name" value="ATPase_P-typ_transduc_dom_A_sf"/>
</dbReference>
<dbReference type="InterPro" id="IPR036412">
    <property type="entry name" value="HAD-like_sf"/>
</dbReference>
<dbReference type="InterPro" id="IPR023214">
    <property type="entry name" value="HAD_sf"/>
</dbReference>
<dbReference type="InterPro" id="IPR006391">
    <property type="entry name" value="P-type_ATPase_bsu_IA"/>
</dbReference>
<dbReference type="InterPro" id="IPR001757">
    <property type="entry name" value="P_typ_ATPase"/>
</dbReference>
<dbReference type="InterPro" id="IPR044492">
    <property type="entry name" value="P_typ_ATPase_HD_dom"/>
</dbReference>
<dbReference type="NCBIfam" id="TIGR01494">
    <property type="entry name" value="ATPase_P-type"/>
    <property type="match status" value="1"/>
</dbReference>
<dbReference type="NCBIfam" id="TIGR01497">
    <property type="entry name" value="kdpB"/>
    <property type="match status" value="1"/>
</dbReference>
<dbReference type="PANTHER" id="PTHR43743">
    <property type="entry name" value="POTASSIUM-TRANSPORTING ATPASE ATP-BINDING SUBUNIT"/>
    <property type="match status" value="1"/>
</dbReference>
<dbReference type="PANTHER" id="PTHR43743:SF1">
    <property type="entry name" value="POTASSIUM-TRANSPORTING ATPASE ATP-BINDING SUBUNIT"/>
    <property type="match status" value="1"/>
</dbReference>
<dbReference type="Pfam" id="PF00122">
    <property type="entry name" value="E1-E2_ATPase"/>
    <property type="match status" value="1"/>
</dbReference>
<dbReference type="Pfam" id="PF00702">
    <property type="entry name" value="Hydrolase"/>
    <property type="match status" value="1"/>
</dbReference>
<dbReference type="SFLD" id="SFLDS00003">
    <property type="entry name" value="Haloacid_Dehalogenase"/>
    <property type="match status" value="1"/>
</dbReference>
<dbReference type="SFLD" id="SFLDF00027">
    <property type="entry name" value="p-type_atpase"/>
    <property type="match status" value="1"/>
</dbReference>
<dbReference type="SUPFAM" id="SSF81653">
    <property type="entry name" value="Calcium ATPase, transduction domain A"/>
    <property type="match status" value="1"/>
</dbReference>
<dbReference type="SUPFAM" id="SSF56784">
    <property type="entry name" value="HAD-like"/>
    <property type="match status" value="1"/>
</dbReference>
<dbReference type="SUPFAM" id="SSF81660">
    <property type="entry name" value="Metal cation-transporting ATPase, ATP-binding domain N"/>
    <property type="match status" value="1"/>
</dbReference>
<dbReference type="PROSITE" id="PS00154">
    <property type="entry name" value="ATPASE_E1_E2"/>
    <property type="match status" value="1"/>
</dbReference>
<organism>
    <name type="scientific">Salmonella typhi</name>
    <dbReference type="NCBI Taxonomy" id="90370"/>
    <lineage>
        <taxon>Bacteria</taxon>
        <taxon>Pseudomonadati</taxon>
        <taxon>Pseudomonadota</taxon>
        <taxon>Gammaproteobacteria</taxon>
        <taxon>Enterobacterales</taxon>
        <taxon>Enterobacteriaceae</taxon>
        <taxon>Salmonella</taxon>
    </lineage>
</organism>
<protein>
    <recommendedName>
        <fullName evidence="1">Putative potassium-transporting ATPase ATP-binding subunit</fullName>
        <ecNumber evidence="1">7.2.2.6</ecNumber>
    </recommendedName>
    <alternativeName>
        <fullName evidence="1">ATP phosphohydrolase [potassium-transporting] B chain</fullName>
    </alternativeName>
    <alternativeName>
        <fullName evidence="1">Potassium-binding and translocating subunit B</fullName>
    </alternativeName>
    <alternativeName>
        <fullName evidence="1">Potassium-translocating ATPase B chain</fullName>
    </alternativeName>
</protein>
<evidence type="ECO:0000255" key="1">
    <source>
        <dbReference type="HAMAP-Rule" id="MF_00285"/>
    </source>
</evidence>
<evidence type="ECO:0000305" key="2"/>
<comment type="function">
    <text evidence="1">Part of the high-affinity ATP-driven potassium transport (or Kdp) system, which catalyzes the hydrolysis of ATP coupled with the electrogenic transport of potassium into the cytoplasm. This subunit is responsible for energy coupling to the transport system and for the release of the potassium ions to the cytoplasm.</text>
</comment>
<comment type="catalytic activity">
    <reaction evidence="1">
        <text>K(+)(out) + ATP + H2O = K(+)(in) + ADP + phosphate + H(+)</text>
        <dbReference type="Rhea" id="RHEA:16777"/>
        <dbReference type="ChEBI" id="CHEBI:15377"/>
        <dbReference type="ChEBI" id="CHEBI:15378"/>
        <dbReference type="ChEBI" id="CHEBI:29103"/>
        <dbReference type="ChEBI" id="CHEBI:30616"/>
        <dbReference type="ChEBI" id="CHEBI:43474"/>
        <dbReference type="ChEBI" id="CHEBI:456216"/>
        <dbReference type="EC" id="7.2.2.6"/>
    </reaction>
    <physiologicalReaction direction="left-to-right" evidence="1">
        <dbReference type="Rhea" id="RHEA:16778"/>
    </physiologicalReaction>
</comment>
<comment type="subunit">
    <text evidence="1">The system is composed of three essential subunits: KdpA, KdpB and KdpC.</text>
</comment>
<comment type="subcellular location">
    <subcellularLocation>
        <location evidence="1">Cell inner membrane</location>
        <topology evidence="1">Multi-pass membrane protein</topology>
    </subcellularLocation>
</comment>
<comment type="similarity">
    <text evidence="1">Belongs to the cation transport ATPase (P-type) (TC 3.A.3) family. Type IA subfamily.</text>
</comment>
<comment type="caution">
    <text evidence="2">Could be the product of a pseudogene. Contains an internal 112 amino acid deletion relative to its orthologs.</text>
</comment>
<sequence length="569" mass="60397">MSRKQLALFEPVLLVQALTDAVKKLSPRAQWRNPVMFVVWAGSVLATLLTLAMVTGQIAGSALFTGVISLWLWFTVLFANFAEALAEGRSKAQANSLKGVKKTAFARRLRAPRHDAQADNVPAAELRKGDIVLVKAGDIIPCDGEVIEGGASVDESAITGESAPVIRESGGDFASVTGGRAVEAAGDVDVLLLDKTGTITLGNRQASDFIPARGVDERTLADAAQLASLADETPEGRSIVILAKQRFNLRERDVQSLHATFVPFTAQSRMSGINIDNRMIRKGSVDAIRRHVESNGGHFPADVEQNVENVARLGATPLVVVEGARVLGVIALKDIVKGGIKERFAQLRKMGIKTVMITGDNRLTAAAIAAEAGVDDFLAEATPEAKLALIRQYQAEGRLVAMTGDGTNDAPALAQADVAVAMNSGTQAAKEAGNMVDLDSNPTKLIEVVHIGKQMLMTRGSLTTFSIANDVAKYFAIIPAAFAATYPQLNALNVMGLHSPNSAILSAVIFNALIIIFLIPLALKGVSYKPLSASAMLRRNLWIYGLGGLVVPFIGIKVIDVLLTLLDLA</sequence>
<accession>Q8Z8E5</accession>
<reference key="1">
    <citation type="journal article" date="2001" name="Nature">
        <title>Complete genome sequence of a multiple drug resistant Salmonella enterica serovar Typhi CT18.</title>
        <authorList>
            <person name="Parkhill J."/>
            <person name="Dougan G."/>
            <person name="James K.D."/>
            <person name="Thomson N.R."/>
            <person name="Pickard D."/>
            <person name="Wain J."/>
            <person name="Churcher C.M."/>
            <person name="Mungall K.L."/>
            <person name="Bentley S.D."/>
            <person name="Holden M.T.G."/>
            <person name="Sebaihia M."/>
            <person name="Baker S."/>
            <person name="Basham D."/>
            <person name="Brooks K."/>
            <person name="Chillingworth T."/>
            <person name="Connerton P."/>
            <person name="Cronin A."/>
            <person name="Davis P."/>
            <person name="Davies R.M."/>
            <person name="Dowd L."/>
            <person name="White N."/>
            <person name="Farrar J."/>
            <person name="Feltwell T."/>
            <person name="Hamlin N."/>
            <person name="Haque A."/>
            <person name="Hien T.T."/>
            <person name="Holroyd S."/>
            <person name="Jagels K."/>
            <person name="Krogh A."/>
            <person name="Larsen T.S."/>
            <person name="Leather S."/>
            <person name="Moule S."/>
            <person name="O'Gaora P."/>
            <person name="Parry C."/>
            <person name="Quail M.A."/>
            <person name="Rutherford K.M."/>
            <person name="Simmonds M."/>
            <person name="Skelton J."/>
            <person name="Stevens K."/>
            <person name="Whitehead S."/>
            <person name="Barrell B.G."/>
        </authorList>
    </citation>
    <scope>NUCLEOTIDE SEQUENCE [LARGE SCALE GENOMIC DNA]</scope>
    <source>
        <strain>CT18</strain>
    </source>
</reference>
<reference key="2">
    <citation type="journal article" date="2003" name="J. Bacteriol.">
        <title>Comparative genomics of Salmonella enterica serovar Typhi strains Ty2 and CT18.</title>
        <authorList>
            <person name="Deng W."/>
            <person name="Liou S.-R."/>
            <person name="Plunkett G. III"/>
            <person name="Mayhew G.F."/>
            <person name="Rose D.J."/>
            <person name="Burland V."/>
            <person name="Kodoyianni V."/>
            <person name="Schwartz D.C."/>
            <person name="Blattner F.R."/>
        </authorList>
    </citation>
    <scope>NUCLEOTIDE SEQUENCE [LARGE SCALE GENOMIC DNA]</scope>
    <source>
        <strain>ATCC 700931 / Ty2</strain>
    </source>
</reference>
<gene>
    <name evidence="1" type="primary">kdpB</name>
    <name type="ordered locus">STY0746</name>
    <name type="ordered locus">t2170</name>
</gene>
<feature type="chain" id="PRO_0000046132" description="Putative potassium-transporting ATPase ATP-binding subunit">
    <location>
        <begin position="1"/>
        <end position="569"/>
    </location>
</feature>
<feature type="transmembrane region" description="Helical" evidence="1">
    <location>
        <begin position="34"/>
        <end position="54"/>
    </location>
</feature>
<feature type="transmembrane region" description="Helical" evidence="1">
    <location>
        <begin position="58"/>
        <end position="78"/>
    </location>
</feature>
<feature type="transmembrane region" description="Helical" evidence="1">
    <location>
        <begin position="475"/>
        <end position="495"/>
    </location>
</feature>
<feature type="transmembrane region" description="Helical" evidence="1">
    <location>
        <begin position="503"/>
        <end position="523"/>
    </location>
</feature>
<feature type="transmembrane region" description="Helical" evidence="1">
    <location>
        <begin position="543"/>
        <end position="563"/>
    </location>
</feature>
<feature type="active site" description="4-aspartylphosphate intermediate" evidence="1">
    <location>
        <position position="194"/>
    </location>
</feature>
<feature type="binding site" evidence="1">
    <location>
        <position position="231"/>
    </location>
    <ligand>
        <name>ATP</name>
        <dbReference type="ChEBI" id="CHEBI:30616"/>
    </ligand>
</feature>
<feature type="binding site" evidence="1">
    <location>
        <position position="235"/>
    </location>
    <ligand>
        <name>ATP</name>
        <dbReference type="ChEBI" id="CHEBI:30616"/>
    </ligand>
</feature>
<feature type="binding site" evidence="1">
    <location>
        <begin position="264"/>
        <end position="271"/>
    </location>
    <ligand>
        <name>ATP</name>
        <dbReference type="ChEBI" id="CHEBI:30616"/>
    </ligand>
</feature>
<feature type="binding site" evidence="1">
    <location>
        <position position="282"/>
    </location>
    <ligand>
        <name>ATP</name>
        <dbReference type="ChEBI" id="CHEBI:30616"/>
    </ligand>
</feature>
<feature type="binding site" evidence="1">
    <location>
        <position position="405"/>
    </location>
    <ligand>
        <name>Mg(2+)</name>
        <dbReference type="ChEBI" id="CHEBI:18420"/>
    </ligand>
</feature>
<feature type="binding site" evidence="1">
    <location>
        <position position="409"/>
    </location>
    <ligand>
        <name>Mg(2+)</name>
        <dbReference type="ChEBI" id="CHEBI:18420"/>
    </ligand>
</feature>
<proteinExistence type="uncertain"/>
<name>KDPB_SALTI</name>
<keyword id="KW-0067">ATP-binding</keyword>
<keyword id="KW-0997">Cell inner membrane</keyword>
<keyword id="KW-1003">Cell membrane</keyword>
<keyword id="KW-0406">Ion transport</keyword>
<keyword id="KW-0460">Magnesium</keyword>
<keyword id="KW-0472">Membrane</keyword>
<keyword id="KW-0479">Metal-binding</keyword>
<keyword id="KW-0547">Nucleotide-binding</keyword>
<keyword id="KW-0597">Phosphoprotein</keyword>
<keyword id="KW-0630">Potassium</keyword>
<keyword id="KW-0633">Potassium transport</keyword>
<keyword id="KW-1278">Translocase</keyword>
<keyword id="KW-0812">Transmembrane</keyword>
<keyword id="KW-1133">Transmembrane helix</keyword>
<keyword id="KW-0813">Transport</keyword>